<keyword id="KW-0227">DNA damage</keyword>
<keyword id="KW-0234">DNA repair</keyword>
<sequence>MAIRQLPEILINQIAAGEVVERPASVVKELVENALDAGATRVDIELEEGGVRLIRIRDNGGGITPDELPLAVSRHATSKIASLDDLETVATLGFRGEALPSIASVSRFTLTSRRHDAEHGSALEIDGGRLGEVVPRAHAPGTTVEVRELFFNVPARRKFLRAERTELGHIEEWLRSLALARPDVELRVSHNGKPSRRYKPGDLYSDARLGETLGDDFARQALRVDHSGAGLRLHGWVAQPHYSRASTDQQYLYVNGRSVRERSVAHAVKMAYGDVLFHGRQPAYVLFLELDPARVDVNVHPAKHEVRFREARLIHDFVYRTLQDALAHTRAGATPNSIGGDGTGYTAATSGGMGGIASGGVPGNGGASIGSGGAYSYASWTPSQTPLGLRVDEARAAYSALYAPPPSSAQQSAGMPNMAGTGLPATAQDSGVPPLGYAIAQLHGIYILAENAEGLIVVDMHAAHERIGYERLKHAHDSIGLHAQPLLVPMTLAVGEREADTAEREAETLATLGFEITRAGPQSLHVRSIPALLANAEPEALLRDVLSDLREHGQSRRIASARDELLSTMACHGAVRANRRLTVPEMNALLRDMEATERSGQCNHGRPTWARFTLSDIDRWFLRGR</sequence>
<protein>
    <recommendedName>
        <fullName evidence="1">DNA mismatch repair protein MutL</fullName>
    </recommendedName>
</protein>
<proteinExistence type="inferred from homology"/>
<evidence type="ECO:0000255" key="1">
    <source>
        <dbReference type="HAMAP-Rule" id="MF_00149"/>
    </source>
</evidence>
<organism>
    <name type="scientific">Xanthomonas axonopodis pv. citri (strain 306)</name>
    <dbReference type="NCBI Taxonomy" id="190486"/>
    <lineage>
        <taxon>Bacteria</taxon>
        <taxon>Pseudomonadati</taxon>
        <taxon>Pseudomonadota</taxon>
        <taxon>Gammaproteobacteria</taxon>
        <taxon>Lysobacterales</taxon>
        <taxon>Lysobacteraceae</taxon>
        <taxon>Xanthomonas</taxon>
    </lineage>
</organism>
<gene>
    <name evidence="1" type="primary">mutL</name>
    <name type="ordered locus">XAC2405</name>
</gene>
<name>MUTL_XANAC</name>
<comment type="function">
    <text evidence="1">This protein is involved in the repair of mismatches in DNA. It is required for dam-dependent methyl-directed DNA mismatch repair. May act as a 'molecular matchmaker', a protein that promotes the formation of a stable complex between two or more DNA-binding proteins in an ATP-dependent manner without itself being part of a final effector complex.</text>
</comment>
<comment type="similarity">
    <text evidence="1">Belongs to the DNA mismatch repair MutL/HexB family.</text>
</comment>
<accession>Q8PJX2</accession>
<reference key="1">
    <citation type="journal article" date="2002" name="Nature">
        <title>Comparison of the genomes of two Xanthomonas pathogens with differing host specificities.</title>
        <authorList>
            <person name="da Silva A.C.R."/>
            <person name="Ferro J.A."/>
            <person name="Reinach F.C."/>
            <person name="Farah C.S."/>
            <person name="Furlan L.R."/>
            <person name="Quaggio R.B."/>
            <person name="Monteiro-Vitorello C.B."/>
            <person name="Van Sluys M.A."/>
            <person name="Almeida N.F. Jr."/>
            <person name="Alves L.M.C."/>
            <person name="do Amaral A.M."/>
            <person name="Bertolini M.C."/>
            <person name="Camargo L.E.A."/>
            <person name="Camarotte G."/>
            <person name="Cannavan F."/>
            <person name="Cardozo J."/>
            <person name="Chambergo F."/>
            <person name="Ciapina L.P."/>
            <person name="Cicarelli R.M.B."/>
            <person name="Coutinho L.L."/>
            <person name="Cursino-Santos J.R."/>
            <person name="El-Dorry H."/>
            <person name="Faria J.B."/>
            <person name="Ferreira A.J.S."/>
            <person name="Ferreira R.C.C."/>
            <person name="Ferro M.I.T."/>
            <person name="Formighieri E.F."/>
            <person name="Franco M.C."/>
            <person name="Greggio C.C."/>
            <person name="Gruber A."/>
            <person name="Katsuyama A.M."/>
            <person name="Kishi L.T."/>
            <person name="Leite R.P."/>
            <person name="Lemos E.G.M."/>
            <person name="Lemos M.V.F."/>
            <person name="Locali E.C."/>
            <person name="Machado M.A."/>
            <person name="Madeira A.M.B.N."/>
            <person name="Martinez-Rossi N.M."/>
            <person name="Martins E.C."/>
            <person name="Meidanis J."/>
            <person name="Menck C.F.M."/>
            <person name="Miyaki C.Y."/>
            <person name="Moon D.H."/>
            <person name="Moreira L.M."/>
            <person name="Novo M.T.M."/>
            <person name="Okura V.K."/>
            <person name="Oliveira M.C."/>
            <person name="Oliveira V.R."/>
            <person name="Pereira H.A."/>
            <person name="Rossi A."/>
            <person name="Sena J.A.D."/>
            <person name="Silva C."/>
            <person name="de Souza R.F."/>
            <person name="Spinola L.A.F."/>
            <person name="Takita M.A."/>
            <person name="Tamura R.E."/>
            <person name="Teixeira E.C."/>
            <person name="Tezza R.I.D."/>
            <person name="Trindade dos Santos M."/>
            <person name="Truffi D."/>
            <person name="Tsai S.M."/>
            <person name="White F.F."/>
            <person name="Setubal J.C."/>
            <person name="Kitajima J.P."/>
        </authorList>
    </citation>
    <scope>NUCLEOTIDE SEQUENCE [LARGE SCALE GENOMIC DNA]</scope>
    <source>
        <strain>306</strain>
    </source>
</reference>
<feature type="chain" id="PRO_0000177994" description="DNA mismatch repair protein MutL">
    <location>
        <begin position="1"/>
        <end position="625"/>
    </location>
</feature>
<dbReference type="EMBL" id="AE008923">
    <property type="protein sequence ID" value="AAM37257.1"/>
    <property type="molecule type" value="Genomic_DNA"/>
</dbReference>
<dbReference type="RefSeq" id="WP_011051559.1">
    <property type="nucleotide sequence ID" value="NC_003919.1"/>
</dbReference>
<dbReference type="SMR" id="Q8PJX2"/>
<dbReference type="GeneID" id="66911518"/>
<dbReference type="KEGG" id="xac:XAC2405"/>
<dbReference type="eggNOG" id="COG0323">
    <property type="taxonomic scope" value="Bacteria"/>
</dbReference>
<dbReference type="HOGENOM" id="CLU_004131_4_2_6"/>
<dbReference type="Proteomes" id="UP000000576">
    <property type="component" value="Chromosome"/>
</dbReference>
<dbReference type="GO" id="GO:0032300">
    <property type="term" value="C:mismatch repair complex"/>
    <property type="evidence" value="ECO:0007669"/>
    <property type="project" value="InterPro"/>
</dbReference>
<dbReference type="GO" id="GO:0005524">
    <property type="term" value="F:ATP binding"/>
    <property type="evidence" value="ECO:0007669"/>
    <property type="project" value="InterPro"/>
</dbReference>
<dbReference type="GO" id="GO:0016887">
    <property type="term" value="F:ATP hydrolysis activity"/>
    <property type="evidence" value="ECO:0007669"/>
    <property type="project" value="InterPro"/>
</dbReference>
<dbReference type="GO" id="GO:0140664">
    <property type="term" value="F:ATP-dependent DNA damage sensor activity"/>
    <property type="evidence" value="ECO:0007669"/>
    <property type="project" value="InterPro"/>
</dbReference>
<dbReference type="GO" id="GO:0030983">
    <property type="term" value="F:mismatched DNA binding"/>
    <property type="evidence" value="ECO:0007669"/>
    <property type="project" value="InterPro"/>
</dbReference>
<dbReference type="GO" id="GO:0006298">
    <property type="term" value="P:mismatch repair"/>
    <property type="evidence" value="ECO:0007669"/>
    <property type="project" value="UniProtKB-UniRule"/>
</dbReference>
<dbReference type="CDD" id="cd16926">
    <property type="entry name" value="HATPase_MutL-MLH-PMS-like"/>
    <property type="match status" value="1"/>
</dbReference>
<dbReference type="CDD" id="cd03482">
    <property type="entry name" value="MutL_Trans_MutL"/>
    <property type="match status" value="1"/>
</dbReference>
<dbReference type="FunFam" id="3.30.230.10:FF:000013">
    <property type="entry name" value="DNA mismatch repair endonuclease MutL"/>
    <property type="match status" value="1"/>
</dbReference>
<dbReference type="FunFam" id="3.30.565.10:FF:000003">
    <property type="entry name" value="DNA mismatch repair endonuclease MutL"/>
    <property type="match status" value="1"/>
</dbReference>
<dbReference type="FunFam" id="3.30.1370.100:FF:000005">
    <property type="entry name" value="DNA mismatch repair protein MutL"/>
    <property type="match status" value="1"/>
</dbReference>
<dbReference type="Gene3D" id="3.30.230.10">
    <property type="match status" value="1"/>
</dbReference>
<dbReference type="Gene3D" id="3.30.565.10">
    <property type="entry name" value="Histidine kinase-like ATPase, C-terminal domain"/>
    <property type="match status" value="1"/>
</dbReference>
<dbReference type="Gene3D" id="3.30.1540.20">
    <property type="entry name" value="MutL, C-terminal domain, dimerisation subdomain"/>
    <property type="match status" value="1"/>
</dbReference>
<dbReference type="Gene3D" id="3.30.1370.100">
    <property type="entry name" value="MutL, C-terminal domain, regulatory subdomain"/>
    <property type="match status" value="1"/>
</dbReference>
<dbReference type="HAMAP" id="MF_00149">
    <property type="entry name" value="DNA_mis_repair"/>
    <property type="match status" value="1"/>
</dbReference>
<dbReference type="InterPro" id="IPR014762">
    <property type="entry name" value="DNA_mismatch_repair_CS"/>
</dbReference>
<dbReference type="InterPro" id="IPR020667">
    <property type="entry name" value="DNA_mismatch_repair_MutL"/>
</dbReference>
<dbReference type="InterPro" id="IPR013507">
    <property type="entry name" value="DNA_mismatch_S5_2-like"/>
</dbReference>
<dbReference type="InterPro" id="IPR036890">
    <property type="entry name" value="HATPase_C_sf"/>
</dbReference>
<dbReference type="InterPro" id="IPR002099">
    <property type="entry name" value="MutL/Mlh/PMS"/>
</dbReference>
<dbReference type="InterPro" id="IPR038973">
    <property type="entry name" value="MutL/Mlh/Pms-like"/>
</dbReference>
<dbReference type="InterPro" id="IPR014790">
    <property type="entry name" value="MutL_C"/>
</dbReference>
<dbReference type="InterPro" id="IPR042120">
    <property type="entry name" value="MutL_C_dimsub"/>
</dbReference>
<dbReference type="InterPro" id="IPR042121">
    <property type="entry name" value="MutL_C_regsub"/>
</dbReference>
<dbReference type="InterPro" id="IPR037198">
    <property type="entry name" value="MutL_C_sf"/>
</dbReference>
<dbReference type="InterPro" id="IPR020568">
    <property type="entry name" value="Ribosomal_Su5_D2-typ_SF"/>
</dbReference>
<dbReference type="InterPro" id="IPR014721">
    <property type="entry name" value="Ribsml_uS5_D2-typ_fold_subgr"/>
</dbReference>
<dbReference type="NCBIfam" id="TIGR00585">
    <property type="entry name" value="mutl"/>
    <property type="match status" value="1"/>
</dbReference>
<dbReference type="NCBIfam" id="NF000949">
    <property type="entry name" value="PRK00095.1-2"/>
    <property type="match status" value="1"/>
</dbReference>
<dbReference type="PANTHER" id="PTHR10073">
    <property type="entry name" value="DNA MISMATCH REPAIR PROTEIN MLH, PMS, MUTL"/>
    <property type="match status" value="1"/>
</dbReference>
<dbReference type="PANTHER" id="PTHR10073:SF12">
    <property type="entry name" value="DNA MISMATCH REPAIR PROTEIN MLH1"/>
    <property type="match status" value="1"/>
</dbReference>
<dbReference type="Pfam" id="PF01119">
    <property type="entry name" value="DNA_mis_repair"/>
    <property type="match status" value="1"/>
</dbReference>
<dbReference type="Pfam" id="PF13589">
    <property type="entry name" value="HATPase_c_3"/>
    <property type="match status" value="1"/>
</dbReference>
<dbReference type="Pfam" id="PF08676">
    <property type="entry name" value="MutL_C"/>
    <property type="match status" value="1"/>
</dbReference>
<dbReference type="SMART" id="SM01340">
    <property type="entry name" value="DNA_mis_repair"/>
    <property type="match status" value="1"/>
</dbReference>
<dbReference type="SMART" id="SM00853">
    <property type="entry name" value="MutL_C"/>
    <property type="match status" value="1"/>
</dbReference>
<dbReference type="SUPFAM" id="SSF55874">
    <property type="entry name" value="ATPase domain of HSP90 chaperone/DNA topoisomerase II/histidine kinase"/>
    <property type="match status" value="1"/>
</dbReference>
<dbReference type="SUPFAM" id="SSF118116">
    <property type="entry name" value="DNA mismatch repair protein MutL"/>
    <property type="match status" value="1"/>
</dbReference>
<dbReference type="SUPFAM" id="SSF54211">
    <property type="entry name" value="Ribosomal protein S5 domain 2-like"/>
    <property type="match status" value="1"/>
</dbReference>
<dbReference type="PROSITE" id="PS00058">
    <property type="entry name" value="DNA_MISMATCH_REPAIR_1"/>
    <property type="match status" value="1"/>
</dbReference>